<organism>
    <name type="scientific">Aglaothamnion neglectum</name>
    <name type="common">Red alga</name>
    <dbReference type="NCBI Taxonomy" id="2765"/>
    <lineage>
        <taxon>Eukaryota</taxon>
        <taxon>Rhodophyta</taxon>
        <taxon>Florideophyceae</taxon>
        <taxon>Rhodymeniophycidae</taxon>
        <taxon>Ceramiales</taxon>
        <taxon>Callithamniaceae</taxon>
        <taxon>Aglaothamnion</taxon>
    </lineage>
</organism>
<comment type="function">
    <text evidence="1">Rod-core linker protein required for attachment of phycocyanin to allophycocyanin in cores of phycobilisomes.</text>
</comment>
<comment type="function">
    <text evidence="1">Linker polypeptides determine the state of aggregation and the location of the disk-shaped phycobiliprotein units within the phycobilisome and modulate their spectroscopic properties in order to mediate a directed and optimal energy transfer.</text>
</comment>
<comment type="subunit">
    <text evidence="1">The phycobilisome is a hemidiscoidal structure that is composed of two distinct substructures: a core complex and a number of rods radiating from the core.</text>
</comment>
<comment type="subcellular location">
    <subcellularLocation>
        <location>Plastid</location>
        <location>Chloroplast</location>
    </subcellularLocation>
    <subcellularLocation>
        <location evidence="1">Plastid</location>
        <location evidence="1">Chloroplast thylakoid membrane</location>
        <topology evidence="1">Peripheral membrane protein</topology>
        <orientation evidence="1">Stromal side</orientation>
    </subcellularLocation>
</comment>
<comment type="similarity">
    <text evidence="2">Belongs to the phycobilisome linker protein family.</text>
</comment>
<keyword id="KW-0042">Antenna complex</keyword>
<keyword id="KW-0150">Chloroplast</keyword>
<keyword id="KW-0472">Membrane</keyword>
<keyword id="KW-0602">Photosynthesis</keyword>
<keyword id="KW-0605">Phycobilisome</keyword>
<keyword id="KW-0934">Plastid</keyword>
<keyword id="KW-0793">Thylakoid</keyword>
<feature type="initiator methionine" description="Removed" evidence="1">
    <location>
        <position position="1"/>
    </location>
</feature>
<feature type="chain" id="PRO_0000199242" description="Phycobilisome rod-core linker polypeptide cpcG">
    <location>
        <begin position="2"/>
        <end position="236"/>
    </location>
</feature>
<feature type="domain" description="PBS-linker" evidence="2">
    <location>
        <begin position="11"/>
        <end position="193"/>
    </location>
</feature>
<name>PYG_AGLNE</name>
<geneLocation type="chloroplast"/>
<reference key="1">
    <citation type="journal article" date="1993" name="Photosyn. Res.">
        <title>Genes encoding phycobilisome linker polypeptides on the plastid genome of Aglaothamnion neglectum (Rhodophyta).</title>
        <authorList>
            <person name="Apt K.E."/>
            <person name="Grossman A.R."/>
        </authorList>
    </citation>
    <scope>NUCLEOTIDE SEQUENCE [GENOMIC DNA]</scope>
</reference>
<gene>
    <name type="primary">cpcG</name>
</gene>
<accession>P34814</accession>
<dbReference type="EMBL" id="L19263">
    <property type="protein sequence ID" value="AAA18513.1"/>
    <property type="molecule type" value="Genomic_DNA"/>
</dbReference>
<dbReference type="SMR" id="P34814"/>
<dbReference type="GO" id="GO:0009535">
    <property type="term" value="C:chloroplast thylakoid membrane"/>
    <property type="evidence" value="ECO:0007669"/>
    <property type="project" value="UniProtKB-SubCell"/>
</dbReference>
<dbReference type="GO" id="GO:0030089">
    <property type="term" value="C:phycobilisome"/>
    <property type="evidence" value="ECO:0007669"/>
    <property type="project" value="UniProtKB-KW"/>
</dbReference>
<dbReference type="GO" id="GO:0015979">
    <property type="term" value="P:photosynthesis"/>
    <property type="evidence" value="ECO:0007669"/>
    <property type="project" value="UniProtKB-KW"/>
</dbReference>
<dbReference type="Gene3D" id="1.10.3130.20">
    <property type="entry name" value="Phycobilisome linker domain"/>
    <property type="match status" value="1"/>
</dbReference>
<dbReference type="InterPro" id="IPR001297">
    <property type="entry name" value="PBS_linker_dom"/>
</dbReference>
<dbReference type="InterPro" id="IPR038255">
    <property type="entry name" value="PBS_linker_sf"/>
</dbReference>
<dbReference type="InterPro" id="IPR016470">
    <property type="entry name" value="Phycobilisome"/>
</dbReference>
<dbReference type="PANTHER" id="PTHR34011">
    <property type="entry name" value="PHYCOBILISOME 32.1 KDA LINKER POLYPEPTIDE, PHYCOCYANIN-ASSOCIATED, ROD 2-RELATED"/>
    <property type="match status" value="1"/>
</dbReference>
<dbReference type="Pfam" id="PF00427">
    <property type="entry name" value="PBS_linker_poly"/>
    <property type="match status" value="1"/>
</dbReference>
<dbReference type="PIRSF" id="PIRSF005898">
    <property type="entry name" value="Phycobilisome_CpeC/CpcI"/>
    <property type="match status" value="1"/>
</dbReference>
<dbReference type="PROSITE" id="PS51445">
    <property type="entry name" value="PBS_LINKER"/>
    <property type="match status" value="1"/>
</dbReference>
<protein>
    <recommendedName>
        <fullName>Phycobilisome rod-core linker polypeptide cpcG</fullName>
    </recommendedName>
</protein>
<proteinExistence type="inferred from homology"/>
<sequence>MSIPILNYSLSTQNQRVNGFEGLPGDELPKIYTTDNLPTSIEMDEIIWAAYRQIFSEHQMLSSCMDRFLESQLRFNQIKVKDFIKGLVLSSAFRNLNYDCNNNYRFVEMCIQRVLGRDIYNEREKLAFAIIIASQGIETFVDFLLNSDEYIENFGDNTVPYQRRRIIAQRSKGEIPFNLKTPRLDYNFLYKKNMPQLLWSGPVRQFRPQEQKPKAGDPALFLNMVLDVSPSYLISS</sequence>
<evidence type="ECO:0000250" key="1"/>
<evidence type="ECO:0000255" key="2">
    <source>
        <dbReference type="PROSITE-ProRule" id="PRU00775"/>
    </source>
</evidence>